<feature type="chain" id="PRO_0000280794" description="SCO2-like protein RBE_0029">
    <location>
        <begin position="1"/>
        <end position="199"/>
    </location>
</feature>
<name>SCO21_RICBR</name>
<evidence type="ECO:0000305" key="1"/>
<accession>Q1RKK4</accession>
<protein>
    <recommendedName>
        <fullName>SCO2-like protein RBE_0029</fullName>
    </recommendedName>
</protein>
<organism>
    <name type="scientific">Rickettsia bellii (strain RML369-C)</name>
    <dbReference type="NCBI Taxonomy" id="336407"/>
    <lineage>
        <taxon>Bacteria</taxon>
        <taxon>Pseudomonadati</taxon>
        <taxon>Pseudomonadota</taxon>
        <taxon>Alphaproteobacteria</taxon>
        <taxon>Rickettsiales</taxon>
        <taxon>Rickettsiaceae</taxon>
        <taxon>Rickettsieae</taxon>
        <taxon>Rickettsia</taxon>
        <taxon>belli group</taxon>
    </lineage>
</organism>
<proteinExistence type="inferred from homology"/>
<sequence>MKKHKNQMYLIKIFIALAVITGIIYLYLFYSSFEPSQIYINTKVSDKNNSQAIKFALKDQKGKVFNDKDLKGHLSLIYFGVTYSLDDENALKKIEDIIKILQKENIVVQTVFITLDPINDTSEVLKKYLENIDNNFIGLTGTIDDITQVANEFKVFYEPKTFDTETGKYELKHSNFVYLISSDGKFLKHYCLGLPKNDR</sequence>
<reference key="1">
    <citation type="journal article" date="2006" name="PLoS Genet.">
        <title>Genome sequence of Rickettsia bellii illuminates the role of amoebae in gene exchanges between intracellular pathogens.</title>
        <authorList>
            <person name="Ogata H."/>
            <person name="La Scola B."/>
            <person name="Audic S."/>
            <person name="Renesto P."/>
            <person name="Blanc G."/>
            <person name="Robert C."/>
            <person name="Fournier P.-E."/>
            <person name="Claverie J.-M."/>
            <person name="Raoult D."/>
        </authorList>
    </citation>
    <scope>NUCLEOTIDE SEQUENCE [LARGE SCALE GENOMIC DNA]</scope>
    <source>
        <strain>RML369-C</strain>
    </source>
</reference>
<dbReference type="EMBL" id="CP000087">
    <property type="protein sequence ID" value="ABE04110.1"/>
    <property type="molecule type" value="Genomic_DNA"/>
</dbReference>
<dbReference type="RefSeq" id="WP_011476725.1">
    <property type="nucleotide sequence ID" value="NC_007940.1"/>
</dbReference>
<dbReference type="SMR" id="Q1RKK4"/>
<dbReference type="KEGG" id="rbe:RBE_0029"/>
<dbReference type="eggNOG" id="COG1999">
    <property type="taxonomic scope" value="Bacteria"/>
</dbReference>
<dbReference type="HOGENOM" id="CLU_050131_6_0_5"/>
<dbReference type="OrthoDB" id="9790194at2"/>
<dbReference type="Proteomes" id="UP000001951">
    <property type="component" value="Chromosome"/>
</dbReference>
<dbReference type="CDD" id="cd02968">
    <property type="entry name" value="SCO"/>
    <property type="match status" value="1"/>
</dbReference>
<dbReference type="Gene3D" id="3.40.30.10">
    <property type="entry name" value="Glutaredoxin"/>
    <property type="match status" value="1"/>
</dbReference>
<dbReference type="InterPro" id="IPR003782">
    <property type="entry name" value="SCO1/SenC"/>
</dbReference>
<dbReference type="InterPro" id="IPR036249">
    <property type="entry name" value="Thioredoxin-like_sf"/>
</dbReference>
<dbReference type="PANTHER" id="PTHR12151">
    <property type="entry name" value="ELECTRON TRANSPORT PROTIN SCO1/SENC FAMILY MEMBER"/>
    <property type="match status" value="1"/>
</dbReference>
<dbReference type="PANTHER" id="PTHR12151:SF25">
    <property type="entry name" value="LINALOOL DEHYDRATASE_ISOMERASE DOMAIN-CONTAINING PROTEIN"/>
    <property type="match status" value="1"/>
</dbReference>
<dbReference type="Pfam" id="PF02630">
    <property type="entry name" value="SCO1-SenC"/>
    <property type="match status" value="1"/>
</dbReference>
<dbReference type="SUPFAM" id="SSF52833">
    <property type="entry name" value="Thioredoxin-like"/>
    <property type="match status" value="1"/>
</dbReference>
<gene>
    <name type="ordered locus">RBE_0029</name>
</gene>
<comment type="similarity">
    <text evidence="1">Belongs to the SCO1/2 family.</text>
</comment>